<keyword id="KW-0002">3D-structure</keyword>
<keyword id="KW-0007">Acetylation</keyword>
<keyword id="KW-0963">Cytoplasm</keyword>
<keyword id="KW-0256">Endoplasmic reticulum</keyword>
<keyword id="KW-0539">Nucleus</keyword>
<keyword id="KW-0597">Phosphoprotein</keyword>
<keyword id="KW-1185">Reference proteome</keyword>
<keyword id="KW-0687">Ribonucleoprotein</keyword>
<keyword id="KW-0689">Ribosomal protein</keyword>
<sequence length="69" mass="7841">MDTSRVQPIKLARVTKVLGRTGSQGQCTQVRVEFMDDTSRSIIRNVKGPVREGDVLTLLESEREARRLR</sequence>
<protein>
    <recommendedName>
        <fullName evidence="4">Small ribosomal subunit protein eS28</fullName>
    </recommendedName>
    <alternativeName>
        <fullName>40S ribosomal protein S28</fullName>
    </alternativeName>
</protein>
<gene>
    <name type="primary">RPS28</name>
</gene>
<organism>
    <name type="scientific">Sus scrofa</name>
    <name type="common">Pig</name>
    <dbReference type="NCBI Taxonomy" id="9823"/>
    <lineage>
        <taxon>Eukaryota</taxon>
        <taxon>Metazoa</taxon>
        <taxon>Chordata</taxon>
        <taxon>Craniata</taxon>
        <taxon>Vertebrata</taxon>
        <taxon>Euteleostomi</taxon>
        <taxon>Mammalia</taxon>
        <taxon>Eutheria</taxon>
        <taxon>Laurasiatheria</taxon>
        <taxon>Artiodactyla</taxon>
        <taxon>Suina</taxon>
        <taxon>Suidae</taxon>
        <taxon>Sus</taxon>
    </lineage>
</organism>
<evidence type="ECO:0000250" key="1">
    <source>
        <dbReference type="UniProtKB" id="P62857"/>
    </source>
</evidence>
<evidence type="ECO:0000250" key="2">
    <source>
        <dbReference type="UniProtKB" id="P62859"/>
    </source>
</evidence>
<evidence type="ECO:0000269" key="3">
    <source>
    </source>
</evidence>
<evidence type="ECO:0000305" key="4"/>
<evidence type="ECO:0007744" key="5">
    <source>
        <dbReference type="PDB" id="3J7P"/>
    </source>
</evidence>
<evidence type="ECO:0007744" key="6">
    <source>
        <dbReference type="PDB" id="3J7R"/>
    </source>
</evidence>
<accession>Q6QAT1</accession>
<dbReference type="EMBL" id="AY550038">
    <property type="protein sequence ID" value="AAS55896.1"/>
    <property type="status" value="ALT_INIT"/>
    <property type="molecule type" value="mRNA"/>
</dbReference>
<dbReference type="RefSeq" id="NP_001001587.1">
    <property type="nucleotide sequence ID" value="NM_001001587.2"/>
</dbReference>
<dbReference type="RefSeq" id="XP_013842818.1">
    <property type="nucleotide sequence ID" value="XM_013987364.2"/>
</dbReference>
<dbReference type="PDB" id="3J7P">
    <property type="method" value="EM"/>
    <property type="resolution" value="3.50 A"/>
    <property type="chains" value="Sc=1-69"/>
</dbReference>
<dbReference type="PDB" id="3J7R">
    <property type="method" value="EM"/>
    <property type="resolution" value="3.90 A"/>
    <property type="chains" value="Sc=1-69"/>
</dbReference>
<dbReference type="PDBsum" id="3J7P"/>
<dbReference type="PDBsum" id="3J7R"/>
<dbReference type="SMR" id="Q6QAT1"/>
<dbReference type="FunCoup" id="Q6QAT1">
    <property type="interactions" value="1809"/>
</dbReference>
<dbReference type="STRING" id="9823.ENSSSCP00000014450"/>
<dbReference type="PaxDb" id="9823-ENSSSCP00000014450"/>
<dbReference type="PeptideAtlas" id="Q6QAT1"/>
<dbReference type="Ensembl" id="ENSSSCT00000014851.5">
    <property type="protein sequence ID" value="ENSSSCP00000014450.2"/>
    <property type="gene ID" value="ENSSSCG00000013597.5"/>
</dbReference>
<dbReference type="Ensembl" id="ENSSSCT00015102681.1">
    <property type="protein sequence ID" value="ENSSSCP00015042678.1"/>
    <property type="gene ID" value="ENSSSCG00015076105.1"/>
</dbReference>
<dbReference type="Ensembl" id="ENSSSCT00025023327.1">
    <property type="protein sequence ID" value="ENSSSCP00025009750.1"/>
    <property type="gene ID" value="ENSSSCG00025017262.1"/>
</dbReference>
<dbReference type="Ensembl" id="ENSSSCT00030024856.1">
    <property type="protein sequence ID" value="ENSSSCP00030011102.1"/>
    <property type="gene ID" value="ENSSSCG00030018006.1"/>
</dbReference>
<dbReference type="Ensembl" id="ENSSSCT00035098887.1">
    <property type="protein sequence ID" value="ENSSSCP00035041815.1"/>
    <property type="gene ID" value="ENSSSCG00035073015.1"/>
</dbReference>
<dbReference type="Ensembl" id="ENSSSCT00040003494.1">
    <property type="protein sequence ID" value="ENSSSCP00040001065.1"/>
    <property type="gene ID" value="ENSSSCG00040002825.1"/>
</dbReference>
<dbReference type="Ensembl" id="ENSSSCT00045052072.1">
    <property type="protein sequence ID" value="ENSSSCP00045036239.1"/>
    <property type="gene ID" value="ENSSSCG00045030525.1"/>
</dbReference>
<dbReference type="Ensembl" id="ENSSSCT00055013312.1">
    <property type="protein sequence ID" value="ENSSSCP00055010465.1"/>
    <property type="gene ID" value="ENSSSCG00055006878.1"/>
</dbReference>
<dbReference type="Ensembl" id="ENSSSCT00060030186.1">
    <property type="protein sequence ID" value="ENSSSCP00060012962.1"/>
    <property type="gene ID" value="ENSSSCG00060022239.1"/>
</dbReference>
<dbReference type="Ensembl" id="ENSSSCT00065054864.1">
    <property type="protein sequence ID" value="ENSSSCP00065023839.1"/>
    <property type="gene ID" value="ENSSSCG00065040129.1"/>
</dbReference>
<dbReference type="Ensembl" id="ENSSSCT00070050597.1">
    <property type="protein sequence ID" value="ENSSSCP00070042768.1"/>
    <property type="gene ID" value="ENSSSCG00070025313.1"/>
</dbReference>
<dbReference type="Ensembl" id="ENSSSCT00105071689">
    <property type="protein sequence ID" value="ENSSSCP00105050712"/>
    <property type="gene ID" value="ENSSSCG00105037604"/>
</dbReference>
<dbReference type="Ensembl" id="ENSSSCT00110045269">
    <property type="protein sequence ID" value="ENSSSCP00110031965"/>
    <property type="gene ID" value="ENSSSCG00110023386"/>
</dbReference>
<dbReference type="Ensembl" id="ENSSSCT00115021740">
    <property type="protein sequence ID" value="ENSSSCP00115020586"/>
    <property type="gene ID" value="ENSSSCG00115012597"/>
</dbReference>
<dbReference type="Ensembl" id="ENSSSCT00130071074">
    <property type="protein sequence ID" value="ENSSSCP00130051421"/>
    <property type="gene ID" value="ENSSSCG00130036275"/>
</dbReference>
<dbReference type="GeneID" id="414420"/>
<dbReference type="KEGG" id="ssc:414420"/>
<dbReference type="CTD" id="6234"/>
<dbReference type="VGNC" id="VGNC:100854">
    <property type="gene designation" value="RPS28"/>
</dbReference>
<dbReference type="eggNOG" id="KOG3502">
    <property type="taxonomic scope" value="Eukaryota"/>
</dbReference>
<dbReference type="GeneTree" id="ENSGT00910000144227"/>
<dbReference type="HOGENOM" id="CLU_178987_1_0_1"/>
<dbReference type="InParanoid" id="Q6QAT1"/>
<dbReference type="OMA" id="NTGMHGE"/>
<dbReference type="OrthoDB" id="10258930at2759"/>
<dbReference type="TreeFam" id="TF300136"/>
<dbReference type="Reactome" id="R-SSC-156827">
    <property type="pathway name" value="L13a-mediated translational silencing of Ceruloplasmin expression"/>
</dbReference>
<dbReference type="Reactome" id="R-SSC-1799339">
    <property type="pathway name" value="SRP-dependent cotranslational protein targeting to membrane"/>
</dbReference>
<dbReference type="Reactome" id="R-SSC-6791226">
    <property type="pathway name" value="Major pathway of rRNA processing in the nucleolus and cytosol"/>
</dbReference>
<dbReference type="Reactome" id="R-SSC-72649">
    <property type="pathway name" value="Translation initiation complex formation"/>
</dbReference>
<dbReference type="Reactome" id="R-SSC-72689">
    <property type="pathway name" value="Formation of a pool of free 40S subunits"/>
</dbReference>
<dbReference type="Reactome" id="R-SSC-72695">
    <property type="pathway name" value="Formation of the ternary complex, and subsequently, the 43S complex"/>
</dbReference>
<dbReference type="Reactome" id="R-SSC-72702">
    <property type="pathway name" value="Ribosomal scanning and start codon recognition"/>
</dbReference>
<dbReference type="Reactome" id="R-SSC-72706">
    <property type="pathway name" value="GTP hydrolysis and joining of the 60S ribosomal subunit"/>
</dbReference>
<dbReference type="Reactome" id="R-SSC-975956">
    <property type="pathway name" value="Nonsense Mediated Decay (NMD) independent of the Exon Junction Complex (EJC)"/>
</dbReference>
<dbReference type="Reactome" id="R-SSC-975957">
    <property type="pathway name" value="Nonsense Mediated Decay (NMD) enhanced by the Exon Junction Complex (EJC)"/>
</dbReference>
<dbReference type="Proteomes" id="UP000008227">
    <property type="component" value="Chromosome 2"/>
</dbReference>
<dbReference type="Proteomes" id="UP000314985">
    <property type="component" value="Chromosome 2"/>
</dbReference>
<dbReference type="Proteomes" id="UP000694570">
    <property type="component" value="Unplaced"/>
</dbReference>
<dbReference type="Proteomes" id="UP000694571">
    <property type="component" value="Unplaced"/>
</dbReference>
<dbReference type="Proteomes" id="UP000694720">
    <property type="component" value="Unplaced"/>
</dbReference>
<dbReference type="Proteomes" id="UP000694722">
    <property type="component" value="Unplaced"/>
</dbReference>
<dbReference type="Proteomes" id="UP000694723">
    <property type="component" value="Unplaced"/>
</dbReference>
<dbReference type="Proteomes" id="UP000694724">
    <property type="component" value="Unplaced"/>
</dbReference>
<dbReference type="Proteomes" id="UP000694725">
    <property type="component" value="Unplaced"/>
</dbReference>
<dbReference type="Proteomes" id="UP000694726">
    <property type="component" value="Unplaced"/>
</dbReference>
<dbReference type="Proteomes" id="UP000694727">
    <property type="component" value="Unplaced"/>
</dbReference>
<dbReference type="Proteomes" id="UP000694728">
    <property type="component" value="Unplaced"/>
</dbReference>
<dbReference type="Bgee" id="ENSSSCG00000013597">
    <property type="expression patterns" value="Expressed in subcutaneous adipose tissue and 44 other cell types or tissues"/>
</dbReference>
<dbReference type="GO" id="GO:0098556">
    <property type="term" value="C:cytoplasmic side of rough endoplasmic reticulum membrane"/>
    <property type="evidence" value="ECO:0000314"/>
    <property type="project" value="UniProtKB"/>
</dbReference>
<dbReference type="GO" id="GO:0022627">
    <property type="term" value="C:cytosolic small ribosomal subunit"/>
    <property type="evidence" value="ECO:0000314"/>
    <property type="project" value="UniProtKB"/>
</dbReference>
<dbReference type="GO" id="GO:0005730">
    <property type="term" value="C:nucleolus"/>
    <property type="evidence" value="ECO:0007669"/>
    <property type="project" value="UniProtKB-SubCell"/>
</dbReference>
<dbReference type="GO" id="GO:0005840">
    <property type="term" value="C:ribosome"/>
    <property type="evidence" value="ECO:0000250"/>
    <property type="project" value="UniProtKB"/>
</dbReference>
<dbReference type="GO" id="GO:0032040">
    <property type="term" value="C:small-subunit processome"/>
    <property type="evidence" value="ECO:0000250"/>
    <property type="project" value="UniProtKB"/>
</dbReference>
<dbReference type="GO" id="GO:0045202">
    <property type="term" value="C:synapse"/>
    <property type="evidence" value="ECO:0007669"/>
    <property type="project" value="Ensembl"/>
</dbReference>
<dbReference type="GO" id="GO:0003735">
    <property type="term" value="F:structural constituent of ribosome"/>
    <property type="evidence" value="ECO:0000318"/>
    <property type="project" value="GO_Central"/>
</dbReference>
<dbReference type="GO" id="GO:0002181">
    <property type="term" value="P:cytoplasmic translation"/>
    <property type="evidence" value="ECO:0000250"/>
    <property type="project" value="UniProtKB"/>
</dbReference>
<dbReference type="GO" id="GO:0030490">
    <property type="term" value="P:maturation of SSU-rRNA"/>
    <property type="evidence" value="ECO:0000318"/>
    <property type="project" value="GO_Central"/>
</dbReference>
<dbReference type="GO" id="GO:0000028">
    <property type="term" value="P:ribosomal small subunit assembly"/>
    <property type="evidence" value="ECO:0000318"/>
    <property type="project" value="GO_Central"/>
</dbReference>
<dbReference type="GO" id="GO:0042274">
    <property type="term" value="P:ribosomal small subunit biogenesis"/>
    <property type="evidence" value="ECO:0000250"/>
    <property type="project" value="UniProtKB"/>
</dbReference>
<dbReference type="GO" id="GO:0042254">
    <property type="term" value="P:ribosome biogenesis"/>
    <property type="evidence" value="ECO:0000250"/>
    <property type="project" value="UniProtKB"/>
</dbReference>
<dbReference type="CDD" id="cd04457">
    <property type="entry name" value="S1_S28E"/>
    <property type="match status" value="1"/>
</dbReference>
<dbReference type="FunFam" id="2.40.50.140:FF:000025">
    <property type="entry name" value="40S ribosomal protein S28"/>
    <property type="match status" value="1"/>
</dbReference>
<dbReference type="Gene3D" id="2.40.50.140">
    <property type="entry name" value="Nucleic acid-binding proteins"/>
    <property type="match status" value="1"/>
</dbReference>
<dbReference type="HAMAP" id="MF_00292">
    <property type="entry name" value="Ribosomal_eS28"/>
    <property type="match status" value="1"/>
</dbReference>
<dbReference type="InterPro" id="IPR012340">
    <property type="entry name" value="NA-bd_OB-fold"/>
</dbReference>
<dbReference type="InterPro" id="IPR000289">
    <property type="entry name" value="Ribosomal_eS28"/>
</dbReference>
<dbReference type="InterPro" id="IPR028626">
    <property type="entry name" value="Ribosomal_eS28_CS"/>
</dbReference>
<dbReference type="PANTHER" id="PTHR10769">
    <property type="entry name" value="40S RIBOSOMAL PROTEIN S28"/>
    <property type="match status" value="1"/>
</dbReference>
<dbReference type="PANTHER" id="PTHR10769:SF3">
    <property type="entry name" value="SMALL RIBOSOMAL SUBUNIT PROTEIN ES28"/>
    <property type="match status" value="1"/>
</dbReference>
<dbReference type="Pfam" id="PF01200">
    <property type="entry name" value="Ribosomal_S28e"/>
    <property type="match status" value="1"/>
</dbReference>
<dbReference type="SUPFAM" id="SSF50249">
    <property type="entry name" value="Nucleic acid-binding proteins"/>
    <property type="match status" value="1"/>
</dbReference>
<dbReference type="PROSITE" id="PS00961">
    <property type="entry name" value="RIBOSOMAL_S28E"/>
    <property type="match status" value="1"/>
</dbReference>
<comment type="function">
    <text evidence="1 3">Component of the small ribosomal subunit. The ribosome is a large ribonucleoprotein complex responsible for the synthesis of proteins in the cell (PubMed:24930395). Part of the small subunit (SSU) processome, first precursor of the small eukaryotic ribosomal subunit. During the assembly of the SSU processome in the nucleolus, many ribosome biogenesis factors, an RNA chaperone and ribosomal proteins associate with the nascent pre-rRNA and work in concert to generate RNA folding, modifications, rearrangements and cleavage as well as targeted degradation of pre-ribosomal RNA by the RNA exosome (By similarity).</text>
</comment>
<comment type="subunit">
    <text evidence="1 3">Component of the 40S small ribosomal subunit (PubMed:24930395). Part of the small subunit (SSU) processome, composed of more than 70 proteins and the RNA chaperone small nucleolar RNA (snoRNA) U3 (By similarity).</text>
</comment>
<comment type="subcellular location">
    <subcellularLocation>
        <location evidence="1">Cytoplasm</location>
        <location evidence="1">Cytosol</location>
    </subcellularLocation>
    <subcellularLocation>
        <location evidence="3">Cytoplasm</location>
    </subcellularLocation>
    <subcellularLocation>
        <location evidence="3">Rough endoplasmic reticulum</location>
    </subcellularLocation>
    <subcellularLocation>
        <location evidence="1">Nucleus</location>
        <location evidence="1">Nucleolus</location>
    </subcellularLocation>
    <text evidence="3">Detected on cytosolic polysomes. Detected in ribosomes that are associated with the rough endoplasmic reticulum.</text>
</comment>
<comment type="similarity">
    <text evidence="4">Belongs to the eukaryotic ribosomal protein eS28 family.</text>
</comment>
<comment type="sequence caution" evidence="4">
    <conflict type="erroneous initiation">
        <sequence resource="EMBL-CDS" id="AAS55896"/>
    </conflict>
    <text>Extended N-terminus.</text>
</comment>
<feature type="chain" id="PRO_0000136824" description="Small ribosomal subunit protein eS28">
    <location>
        <begin position="1"/>
        <end position="69"/>
    </location>
</feature>
<feature type="modified residue" description="N-acetylmethionine" evidence="2">
    <location>
        <position position="1"/>
    </location>
</feature>
<feature type="modified residue" description="Phosphoserine" evidence="1">
    <location>
        <position position="41"/>
    </location>
</feature>
<name>RS28_PIG</name>
<reference key="1">
    <citation type="submission" date="2004-02" db="EMBL/GenBank/DDBJ databases">
        <title>Identification of differentially expressed genes in porcine embryos.</title>
        <authorList>
            <person name="Lee H.Y."/>
            <person name="Cui X.S."/>
            <person name="Jeong Y.J."/>
            <person name="Shin M.L."/>
            <person name="Hwang K.C."/>
            <person name="Kim N.H."/>
        </authorList>
    </citation>
    <scope>NUCLEOTIDE SEQUENCE [MRNA]</scope>
</reference>
<reference evidence="5 6" key="2">
    <citation type="journal article" date="2014" name="Cell">
        <title>Structure of the mammalian ribosome-Sec61 complex to 3.4 A resolution.</title>
        <authorList>
            <person name="Voorhees R.M."/>
            <person name="Fernandez I.S."/>
            <person name="Scheres S.H."/>
            <person name="Hegde R.S."/>
        </authorList>
    </citation>
    <scope>STRUCTURE BY ELECTRON MICROSCOPY (3.50 ANGSTROMS)</scope>
    <scope>FUNCTION</scope>
    <scope>SUBCELLULAR LOCATION</scope>
    <scope>SUBUNIT</scope>
</reference>
<proteinExistence type="evidence at protein level"/>